<proteinExistence type="evidence at protein level"/>
<feature type="signal peptide" evidence="2">
    <location>
        <begin position="1"/>
        <end position="19"/>
    </location>
</feature>
<feature type="chain" id="PRO_0000429661" description="Endo-1,4-beta-xylanase A">
    <location>
        <begin position="20"/>
        <end position="329"/>
    </location>
</feature>
<feature type="domain" description="GH10" evidence="3">
    <location>
        <begin position="48"/>
        <end position="328"/>
    </location>
</feature>
<feature type="active site" description="Proton donor" evidence="1">
    <location>
        <position position="159"/>
    </location>
</feature>
<feature type="active site" description="Nucleophile" evidence="4">
    <location>
        <position position="265"/>
    </location>
</feature>
<feature type="glycosylation site" description="N-linked (GlcNAc...) asparagine" evidence="2">
    <location>
        <position position="285"/>
    </location>
</feature>
<feature type="disulfide bond" evidence="1">
    <location>
        <begin position="283"/>
        <end position="289"/>
    </location>
</feature>
<keyword id="KW-0119">Carbohydrate metabolism</keyword>
<keyword id="KW-1015">Disulfide bond</keyword>
<keyword id="KW-0325">Glycoprotein</keyword>
<keyword id="KW-0326">Glycosidase</keyword>
<keyword id="KW-0378">Hydrolase</keyword>
<keyword id="KW-0624">Polysaccharide degradation</keyword>
<keyword id="KW-0964">Secreted</keyword>
<keyword id="KW-0732">Signal</keyword>
<keyword id="KW-0858">Xylan degradation</keyword>
<gene>
    <name type="primary">XynA</name>
</gene>
<dbReference type="EC" id="3.2.1.8"/>
<dbReference type="EMBL" id="AF249328">
    <property type="protein sequence ID" value="AAF71268.1"/>
    <property type="molecule type" value="Genomic_DNA"/>
</dbReference>
<dbReference type="SMR" id="Q9P8J1"/>
<dbReference type="CAZy" id="GH10">
    <property type="family name" value="Glycoside Hydrolase Family 10"/>
</dbReference>
<dbReference type="GlyCosmos" id="Q9P8J1">
    <property type="glycosylation" value="1 site, No reported glycans"/>
</dbReference>
<dbReference type="BRENDA" id="3.2.1.8">
    <property type="organism ID" value="4635"/>
</dbReference>
<dbReference type="UniPathway" id="UPA00114"/>
<dbReference type="GO" id="GO:0005576">
    <property type="term" value="C:extracellular region"/>
    <property type="evidence" value="ECO:0007669"/>
    <property type="project" value="UniProtKB-SubCell"/>
</dbReference>
<dbReference type="GO" id="GO:0031176">
    <property type="term" value="F:endo-1,4-beta-xylanase activity"/>
    <property type="evidence" value="ECO:0007669"/>
    <property type="project" value="UniProtKB-EC"/>
</dbReference>
<dbReference type="GO" id="GO:0045493">
    <property type="term" value="P:xylan catabolic process"/>
    <property type="evidence" value="ECO:0007669"/>
    <property type="project" value="UniProtKB-UniPathway"/>
</dbReference>
<dbReference type="FunFam" id="3.20.20.80:FF:000094">
    <property type="entry name" value="Endo-1,4-beta-xylanase"/>
    <property type="match status" value="1"/>
</dbReference>
<dbReference type="Gene3D" id="3.20.20.80">
    <property type="entry name" value="Glycosidases"/>
    <property type="match status" value="1"/>
</dbReference>
<dbReference type="InterPro" id="IPR044846">
    <property type="entry name" value="GH10"/>
</dbReference>
<dbReference type="InterPro" id="IPR031158">
    <property type="entry name" value="GH10_AS"/>
</dbReference>
<dbReference type="InterPro" id="IPR001000">
    <property type="entry name" value="GH10_dom"/>
</dbReference>
<dbReference type="InterPro" id="IPR017853">
    <property type="entry name" value="Glycoside_hydrolase_SF"/>
</dbReference>
<dbReference type="PANTHER" id="PTHR31490:SF76">
    <property type="entry name" value="ENDO-1,4-BETA-XYLANASE C"/>
    <property type="match status" value="1"/>
</dbReference>
<dbReference type="PANTHER" id="PTHR31490">
    <property type="entry name" value="GLYCOSYL HYDROLASE"/>
    <property type="match status" value="1"/>
</dbReference>
<dbReference type="Pfam" id="PF00331">
    <property type="entry name" value="Glyco_hydro_10"/>
    <property type="match status" value="1"/>
</dbReference>
<dbReference type="PRINTS" id="PR00134">
    <property type="entry name" value="GLHYDRLASE10"/>
</dbReference>
<dbReference type="SMART" id="SM00633">
    <property type="entry name" value="Glyco_10"/>
    <property type="match status" value="1"/>
</dbReference>
<dbReference type="SUPFAM" id="SSF51445">
    <property type="entry name" value="(Trans)glycosidases"/>
    <property type="match status" value="1"/>
</dbReference>
<dbReference type="PROSITE" id="PS00591">
    <property type="entry name" value="GH10_1"/>
    <property type="match status" value="1"/>
</dbReference>
<dbReference type="PROSITE" id="PS51760">
    <property type="entry name" value="GH10_2"/>
    <property type="match status" value="1"/>
</dbReference>
<protein>
    <recommendedName>
        <fullName>Endo-1,4-beta-xylanase A</fullName>
        <shortName>Xylanase A</shortName>
        <ecNumber>3.2.1.8</ecNumber>
    </recommendedName>
    <alternativeName>
        <fullName>1,4-beta-D-xylan xylanohydrolase A</fullName>
    </alternativeName>
</protein>
<sequence length="329" mass="35351">MVQLKTAALALLFAGQAISSPVDIDSRQASVSIDAKFKAHGKKYLGTIGDQYTLTKNSKNPAIIKADFGQLTPENSMKWDATEPNRGQFSFSGSDYLVNFAQSNGKLIRGHTLVWHSQLPGWVSSITDKNTLISVLKNHITTVMTRYKGKIYAWDVLNEIFNEDGSLRNSVFYNVIGEDYVRIAFETARSVDPNAKLYINDYNLDSAGYSKVNGMVSHVKKWLAAGIPIDGIGSQTHLGAGAGANVAGALNALAGAGTTEIAITELDIAGASSTDYVNVVKACLNQSKCVGITVWGVADPDSWRSSSSPLLFDSNYNPKAAYNAIANAL</sequence>
<evidence type="ECO:0000250" key="1"/>
<evidence type="ECO:0000255" key="2"/>
<evidence type="ECO:0000255" key="3">
    <source>
        <dbReference type="PROSITE-ProRule" id="PRU01096"/>
    </source>
</evidence>
<evidence type="ECO:0000255" key="4">
    <source>
        <dbReference type="PROSITE-ProRule" id="PRU10061"/>
    </source>
</evidence>
<evidence type="ECO:0000269" key="5">
    <source>
    </source>
</evidence>
<evidence type="ECO:0000305" key="6"/>
<comment type="function">
    <text evidence="5">Endo-1,4-beta-xylanase involved in the hydrolysis of xylan, a major structural heterogeneous polysaccharide found in plant biomass representing the second most abundant polysaccharide in the biosphere, after cellulose.</text>
</comment>
<comment type="catalytic activity">
    <reaction evidence="5">
        <text>Endohydrolysis of (1-&gt;4)-beta-D-xylosidic linkages in xylans.</text>
        <dbReference type="EC" id="3.2.1.8"/>
    </reaction>
</comment>
<comment type="activity regulation">
    <text evidence="5">N-bromosuccinimide completely inhibits the catalytic activity.</text>
</comment>
<comment type="biophysicochemical properties">
    <phDependence>
        <text evidence="5">Optimum pH is 7.0.</text>
    </phDependence>
    <temperatureDependence>
        <text evidence="5">Optimum temperature is 60 degrees Celsius.</text>
    </temperatureDependence>
</comment>
<comment type="pathway">
    <text>Glycan degradation; xylan degradation.</text>
</comment>
<comment type="subcellular location">
    <subcellularLocation>
        <location>Secreted</location>
    </subcellularLocation>
</comment>
<comment type="induction">
    <text>Expression is induced by oat spelt xylan but not by birchwood xylan, xylose, or xylitol. Expression is repressed by glucose. The promoter contains 3 creA consensus binding sites, 1 xlnR consensus binding site, and 3 pH activator pacC consensus binding sites.</text>
</comment>
<comment type="similarity">
    <text evidence="6">Belongs to the glycosyl hydrolase 10 (cellulase F) family.</text>
</comment>
<accession>Q9P8J1</accession>
<name>XYNA_TALPU</name>
<reference key="1">
    <citation type="journal article" date="2001" name="Biol. Res.">
        <title>Structure analysis of the endoxylanase A gene from penicillium purpurogenum.</title>
        <authorList>
            <person name="Chavez R."/>
            <person name="Almarza C."/>
            <person name="Schachter K."/>
            <person name="Peirano A."/>
            <person name="Bull P."/>
            <person name="Eyzaguirre J."/>
        </authorList>
    </citation>
    <scope>NUCLEOTIDE SEQUENCE [GENOMIC DNA]</scope>
</reference>
<reference key="2">
    <citation type="journal article" date="1995" name="J. Biotechnol.">
        <title>Penicillium purpurogenum produces several xylanases: purification and properties of two of the enzymes.</title>
        <authorList>
            <person name="Belancic A."/>
            <person name="Scarpa J."/>
            <person name="Peirano A."/>
            <person name="Diaz R."/>
            <person name="Steiner J."/>
            <person name="Eyzaguirre J."/>
        </authorList>
    </citation>
    <scope>SUBCELLULAR LOCATION</scope>
    <scope>FUNCTION</scope>
    <scope>CATALYTIC ACTIVITY</scope>
    <scope>BIOPHYSICOCHEMICAL PROPERTIES</scope>
    <scope>ACTIVITY REGULATION</scope>
</reference>
<organism>
    <name type="scientific">Talaromyces purpureogenus</name>
    <name type="common">Soft rot fungus</name>
    <name type="synonym">Penicillium purpureogenum</name>
    <dbReference type="NCBI Taxonomy" id="1266744"/>
    <lineage>
        <taxon>Eukaryota</taxon>
        <taxon>Fungi</taxon>
        <taxon>Dikarya</taxon>
        <taxon>Ascomycota</taxon>
        <taxon>Pezizomycotina</taxon>
        <taxon>Eurotiomycetes</taxon>
        <taxon>Eurotiomycetidae</taxon>
        <taxon>Eurotiales</taxon>
        <taxon>Trichocomaceae</taxon>
        <taxon>Talaromyces</taxon>
        <taxon>Talaromyces sect. Talaromyces</taxon>
    </lineage>
</organism>